<comment type="function">
    <text evidence="1">Binds and activates TIE2 receptor by inducing its tyrosine phosphorylation. Implicated in endothelial developmental processes later and distinct from that of VEGF. Appears to play a crucial role in mediating reciprocal interactions between the endothelium and surrounding matrix and mesenchyme. Mediates blood vessel maturation/stability. It may play an important role in the heart early development (By similarity).</text>
</comment>
<comment type="subunit">
    <text evidence="2 3">Homooligomer (By similarity). Interacts with TEK/TIE2 (By similarity). Interacts with SVEP1/polydom (By similarity). Interacts with THBD; this interaction significantly inhibits the generation of activated PC and TAFIa/CPB2 by the thrombin/thrombomodulin complex (By similarity).</text>
</comment>
<comment type="subcellular location">
    <subcellularLocation>
        <location evidence="2">Secreted</location>
    </subcellularLocation>
</comment>
<protein>
    <recommendedName>
        <fullName>Angiopoietin-1</fullName>
        <shortName>ANG-1</shortName>
    </recommendedName>
</protein>
<organism>
    <name type="scientific">Canis lupus familiaris</name>
    <name type="common">Dog</name>
    <name type="synonym">Canis familiaris</name>
    <dbReference type="NCBI Taxonomy" id="9615"/>
    <lineage>
        <taxon>Eukaryota</taxon>
        <taxon>Metazoa</taxon>
        <taxon>Chordata</taxon>
        <taxon>Craniata</taxon>
        <taxon>Vertebrata</taxon>
        <taxon>Euteleostomi</taxon>
        <taxon>Mammalia</taxon>
        <taxon>Eutheria</taxon>
        <taxon>Laurasiatheria</taxon>
        <taxon>Carnivora</taxon>
        <taxon>Caniformia</taxon>
        <taxon>Canidae</taxon>
        <taxon>Canis</taxon>
    </lineage>
</organism>
<proteinExistence type="evidence at transcript level"/>
<accession>Q60FC1</accession>
<feature type="signal peptide" evidence="4">
    <location>
        <begin position="1"/>
        <end position="19"/>
    </location>
</feature>
<feature type="chain" id="PRO_0000041839" description="Angiopoietin-1">
    <location>
        <begin position="20"/>
        <end position="497"/>
    </location>
</feature>
<feature type="domain" description="Fibrinogen C-terminal" evidence="5">
    <location>
        <begin position="276"/>
        <end position="496"/>
    </location>
</feature>
<feature type="coiled-coil region" evidence="4">
    <location>
        <begin position="158"/>
        <end position="256"/>
    </location>
</feature>
<feature type="glycosylation site" description="N-linked (GlcNAc...) asparagine" evidence="4">
    <location>
        <position position="92"/>
    </location>
</feature>
<feature type="glycosylation site" description="N-linked (GlcNAc...) asparagine" evidence="4">
    <location>
        <position position="122"/>
    </location>
</feature>
<feature type="glycosylation site" description="N-linked (GlcNAc...) asparagine" evidence="4">
    <location>
        <position position="154"/>
    </location>
</feature>
<feature type="glycosylation site" description="N-linked (GlcNAc...) asparagine" evidence="4">
    <location>
        <position position="243"/>
    </location>
</feature>
<feature type="glycosylation site" description="N-linked (GlcNAc...) asparagine" evidence="4">
    <location>
        <position position="294"/>
    </location>
</feature>
<feature type="disulfide bond" evidence="5">
    <location>
        <begin position="285"/>
        <end position="314"/>
    </location>
</feature>
<feature type="disulfide bond" evidence="5">
    <location>
        <begin position="438"/>
        <end position="451"/>
    </location>
</feature>
<dbReference type="EMBL" id="AB192412">
    <property type="protein sequence ID" value="BAD54826.1"/>
    <property type="molecule type" value="mRNA"/>
</dbReference>
<dbReference type="RefSeq" id="NP_001005754.1">
    <property type="nucleotide sequence ID" value="NM_001005754.2"/>
</dbReference>
<dbReference type="SMR" id="Q60FC1"/>
<dbReference type="FunCoup" id="Q60FC1">
    <property type="interactions" value="238"/>
</dbReference>
<dbReference type="STRING" id="9615.ENSCAFP00000066685"/>
<dbReference type="GlyCosmos" id="Q60FC1">
    <property type="glycosylation" value="5 sites, No reported glycans"/>
</dbReference>
<dbReference type="PaxDb" id="9612-ENSCAFP00000000993"/>
<dbReference type="GeneID" id="403656"/>
<dbReference type="KEGG" id="cfa:403656"/>
<dbReference type="CTD" id="284"/>
<dbReference type="eggNOG" id="KOG2579">
    <property type="taxonomic scope" value="Eukaryota"/>
</dbReference>
<dbReference type="InParanoid" id="Q60FC1"/>
<dbReference type="OrthoDB" id="7735366at2759"/>
<dbReference type="Proteomes" id="UP000002254">
    <property type="component" value="Unplaced"/>
</dbReference>
<dbReference type="Proteomes" id="UP000694429">
    <property type="component" value="Unplaced"/>
</dbReference>
<dbReference type="Proteomes" id="UP000694542">
    <property type="component" value="Unplaced"/>
</dbReference>
<dbReference type="Proteomes" id="UP000805418">
    <property type="component" value="Unplaced"/>
</dbReference>
<dbReference type="GO" id="GO:0062023">
    <property type="term" value="C:collagen-containing extracellular matrix"/>
    <property type="evidence" value="ECO:0000318"/>
    <property type="project" value="GO_Central"/>
</dbReference>
<dbReference type="GO" id="GO:0005615">
    <property type="term" value="C:extracellular space"/>
    <property type="evidence" value="ECO:0000318"/>
    <property type="project" value="GO_Central"/>
</dbReference>
<dbReference type="GO" id="GO:0030971">
    <property type="term" value="F:receptor tyrosine kinase binding"/>
    <property type="evidence" value="ECO:0000318"/>
    <property type="project" value="GO_Central"/>
</dbReference>
<dbReference type="GO" id="GO:0001525">
    <property type="term" value="P:angiogenesis"/>
    <property type="evidence" value="ECO:0000318"/>
    <property type="project" value="GO_Central"/>
</dbReference>
<dbReference type="GO" id="GO:0007596">
    <property type="term" value="P:blood coagulation"/>
    <property type="evidence" value="ECO:0007669"/>
    <property type="project" value="InterPro"/>
</dbReference>
<dbReference type="GO" id="GO:0030154">
    <property type="term" value="P:cell differentiation"/>
    <property type="evidence" value="ECO:0007669"/>
    <property type="project" value="UniProtKB-KW"/>
</dbReference>
<dbReference type="GO" id="GO:0048014">
    <property type="term" value="P:Tie signaling pathway"/>
    <property type="evidence" value="ECO:0000318"/>
    <property type="project" value="GO_Central"/>
</dbReference>
<dbReference type="CDD" id="cd00087">
    <property type="entry name" value="FReD"/>
    <property type="match status" value="1"/>
</dbReference>
<dbReference type="FunFam" id="3.90.215.10:FF:000005">
    <property type="entry name" value="angiopoietin-1 isoform X2"/>
    <property type="match status" value="1"/>
</dbReference>
<dbReference type="FunFam" id="4.10.530.10:FF:000001">
    <property type="entry name" value="angiopoietin-2 isoform X1"/>
    <property type="match status" value="1"/>
</dbReference>
<dbReference type="Gene3D" id="3.90.215.10">
    <property type="entry name" value="Gamma Fibrinogen, chain A, domain 1"/>
    <property type="match status" value="1"/>
</dbReference>
<dbReference type="Gene3D" id="4.10.530.10">
    <property type="entry name" value="Gamma-fibrinogen Carboxyl Terminal Fragment, domain 2"/>
    <property type="match status" value="1"/>
</dbReference>
<dbReference type="InterPro" id="IPR037579">
    <property type="entry name" value="FIB_ANG-like"/>
</dbReference>
<dbReference type="InterPro" id="IPR036056">
    <property type="entry name" value="Fibrinogen-like_C"/>
</dbReference>
<dbReference type="InterPro" id="IPR014716">
    <property type="entry name" value="Fibrinogen_a/b/g_C_1"/>
</dbReference>
<dbReference type="InterPro" id="IPR002181">
    <property type="entry name" value="Fibrinogen_a/b/g_C_dom"/>
</dbReference>
<dbReference type="InterPro" id="IPR020837">
    <property type="entry name" value="Fibrinogen_CS"/>
</dbReference>
<dbReference type="NCBIfam" id="NF040941">
    <property type="entry name" value="GGGWT_bact"/>
    <property type="match status" value="1"/>
</dbReference>
<dbReference type="PANTHER" id="PTHR47221">
    <property type="entry name" value="FIBRINOGEN ALPHA CHAIN"/>
    <property type="match status" value="1"/>
</dbReference>
<dbReference type="PANTHER" id="PTHR47221:SF6">
    <property type="entry name" value="FIBRINOGEN ALPHA CHAIN"/>
    <property type="match status" value="1"/>
</dbReference>
<dbReference type="Pfam" id="PF25443">
    <property type="entry name" value="ANG-1"/>
    <property type="match status" value="1"/>
</dbReference>
<dbReference type="Pfam" id="PF00147">
    <property type="entry name" value="Fibrinogen_C"/>
    <property type="match status" value="1"/>
</dbReference>
<dbReference type="SMART" id="SM00186">
    <property type="entry name" value="FBG"/>
    <property type="match status" value="1"/>
</dbReference>
<dbReference type="SUPFAM" id="SSF56496">
    <property type="entry name" value="Fibrinogen C-terminal domain-like"/>
    <property type="match status" value="1"/>
</dbReference>
<dbReference type="PROSITE" id="PS00514">
    <property type="entry name" value="FIBRINOGEN_C_1"/>
    <property type="match status" value="1"/>
</dbReference>
<dbReference type="PROSITE" id="PS51406">
    <property type="entry name" value="FIBRINOGEN_C_2"/>
    <property type="match status" value="1"/>
</dbReference>
<sequence>MTVFLSFAFLAAILTHIGCSNQRRSPENGGRRYNRIQHGQCAYTFILPEHDGNCRESTTDQYNTNALQRDAPHVGPDFSSQKLQHLEHVMENYTQWLQKIENYIVENMKSEMAQIQQNAVQNHTATMLEIGTSLLSQTAEQTRKLTDVETQVLNQTSRLEIQLLENSLSTYKLEKQLLQQTNEILKIHEKNSLLEHKILEMEGKHKEEWDTLKEERENLQVLVTRQTYIIQELEKQLNRATNNNSVLQKQQLELMDTVHNLVNLCTKEVLLKGGKKEEEKPFRDCADVYQAGFNKSGIYTIYINNMPEPKKVFCNMDVNGGGWTVIQHREDGSLDFQRGWKEYKMGFGNPSGEYWLGNEFIFAITSQRQYTLRIELMDCEGNRAYSQYDRFHIGNEKQNYRLYLKCHTGTAGKQSSLILHGADFSTKDADNDNCMCKCALMLTGGWWFDACGPSNLNGMFYTAGQNHGKLNGIKWHYFKGPSYSLRSTTMMIRPLDF</sequence>
<reference key="1">
    <citation type="journal article" date="2006" name="Res. Vet. Sci.">
        <title>Gene expressions of canine angiopoietin-1 and -2 in normal tissues and spontaneous tumours.</title>
        <authorList>
            <person name="Kato Y."/>
            <person name="Asano K."/>
            <person name="Mizutani I."/>
            <person name="Konno T."/>
            <person name="Sasaki Y."/>
            <person name="Kutara K."/>
            <person name="Teshima K."/>
            <person name="Edamura K."/>
            <person name="Kano R."/>
            <person name="Suzuki K."/>
            <person name="Shibuya H."/>
            <person name="Sato T."/>
            <person name="Hasegawa A."/>
            <person name="Tanaka S."/>
        </authorList>
    </citation>
    <scope>NUCLEOTIDE SEQUENCE [MRNA]</scope>
</reference>
<keyword id="KW-0037">Angiogenesis</keyword>
<keyword id="KW-0175">Coiled coil</keyword>
<keyword id="KW-0217">Developmental protein</keyword>
<keyword id="KW-0221">Differentiation</keyword>
<keyword id="KW-1015">Disulfide bond</keyword>
<keyword id="KW-0325">Glycoprotein</keyword>
<keyword id="KW-1185">Reference proteome</keyword>
<keyword id="KW-0964">Secreted</keyword>
<keyword id="KW-0732">Signal</keyword>
<evidence type="ECO:0000250" key="1"/>
<evidence type="ECO:0000250" key="2">
    <source>
        <dbReference type="UniProtKB" id="O08538"/>
    </source>
</evidence>
<evidence type="ECO:0000250" key="3">
    <source>
        <dbReference type="UniProtKB" id="Q15389"/>
    </source>
</evidence>
<evidence type="ECO:0000255" key="4"/>
<evidence type="ECO:0000255" key="5">
    <source>
        <dbReference type="PROSITE-ProRule" id="PRU00739"/>
    </source>
</evidence>
<name>ANGP1_CANLF</name>
<gene>
    <name type="primary">ANGPT1</name>
</gene>